<sequence length="1381" mass="154313">MKAPAVLAPGILVLLFTLVQRSNGECKEALAKSEMNVNMKYQLPNFTAETPIQNVILHEHHIFLGATNYIYVLNEEDLQKVAEYKTGPVLEHPDCFPCQDCSSKANLSGGVWKDNINMALVVDTYYDDQLISCGSGNRGTCQRHVFPHNHTADIQSEVHCIFSPQIEEPSQCPDCVVSALGAKVLSSVKDRFINFFVGNTINSSYFPHHPLHSISVRRLKETKDGFVFLTDQSYIDVLPEFRDSYPIKYVHAFESNNFIYFLSVQRETLNAQTFHTRIIRFCSINSGLHSYMEMPLECILTEKRKKRSTKKEVFNILQAAYVSKPGAQLARQIGASLNDDILFGVFAQSKPDSAEPMDRSAMCAFPIKYVNDFFNKIVNKNNVRCLQHFYGPNHEHCFNRTLLRNSSGCEARRDEYRAEFTTALQRVDLFMGQFSEVLLTSISTFVKGDLTIANLGTSEGRFMQVVVSRSGPSTPHVNFLLDSHPVSPEVIVEHPLNQNGYTLVVTGKKITKIPLNGLGCRHFQSCSQCLSAPPFVQCGWCQDKCVRSEDCPSGTWTQQICLPAIYKVFPTSAPLEGGTRLTICGWDFGFRRNNKFDLKKTRVLLGNESCTLTLSESTMNTLKCTVGPAMNKHFNMSIIISNGHGTTQYSTFSYVDPIITSISPKYGPMAGGTLLTLTGNYLNSGNSRHISIGGKTCTLKSVSNSILECYTPAQTISTEFAVKLKIDLANRETSIFSYREDPIVYEIHPTKSFISGGSTITGVGKNLHSVSVPRMVINVHEAGRNFTVACQHRSNSEIICCTTPSLQQLNLQLPLKTKAFFMLDGILSKYFDLIYVHNPVFKPFEKPVMISMGNENVLEIKGNDIDPEAVKGEVLKVGNKSCENIHLHSEAVLCTVPNDLLKLNSELNIEWKQAISSTVLGKVIVQPDQNFTGLIAGVVSISIALLLLLGLFLWLKKRKQIKDLGSELVRYDARVHTPHLDRLVSARSVSPTTEMVSNESVDYRATFPEDQFPNSSQNGSCRQVQYPLTDMSPILTSGDSDISSPLLQNTVHIDLSALNPELVQAVQHVVIGPSSLIVHFNEVIGRGHFGCVYHGTLLDNDGKKIHCAVKSLNRITDIGEVSQFLTEGIIMKDFSHPNVLSLLGICLRSEGSPLVVLPYMKHGDLRNFIRNETHNPTVKDLIGFGLQVAKGMKYLASKKFVHRDLAARNCMLDEKFTVKVADFGLARDMYDKEYYSVHNKTGAKLPVKWMALESLQTQKFTTKSDVWSFGVLLWELMTRGAPPYPDVNTFDITVYLLQGRRLLQPEYCPDPLYEVMLKCWHPKAEMRPSFSELVSRISAIFSTFIGEHYVHVNATYVNVKCVAPYPSLLSSEDNADDEVDT</sequence>
<feature type="signal peptide" evidence="4">
    <location>
        <begin position="1"/>
        <end position="24"/>
    </location>
</feature>
<feature type="chain" id="PRO_0000260420" description="Hepatocyte growth factor receptor">
    <location>
        <begin position="25"/>
        <end position="1381"/>
    </location>
</feature>
<feature type="topological domain" description="Extracellular" evidence="4">
    <location>
        <begin position="25"/>
        <end position="932"/>
    </location>
</feature>
<feature type="transmembrane region" description="Helical" evidence="4">
    <location>
        <begin position="933"/>
        <end position="955"/>
    </location>
</feature>
<feature type="topological domain" description="Cytoplasmic" evidence="4">
    <location>
        <begin position="956"/>
        <end position="1381"/>
    </location>
</feature>
<feature type="domain" description="Sema" evidence="6">
    <location>
        <begin position="27"/>
        <end position="515"/>
    </location>
</feature>
<feature type="domain" description="IPT/TIG 1">
    <location>
        <begin position="563"/>
        <end position="655"/>
    </location>
</feature>
<feature type="domain" description="IPT/TIG 2">
    <location>
        <begin position="657"/>
        <end position="739"/>
    </location>
</feature>
<feature type="domain" description="IPT/TIG 3">
    <location>
        <begin position="742"/>
        <end position="836"/>
    </location>
</feature>
<feature type="domain" description="Protein kinase" evidence="5">
    <location>
        <begin position="1078"/>
        <end position="1345"/>
    </location>
</feature>
<feature type="region of interest" description="Interaction with RANBP9" evidence="1">
    <location>
        <begin position="1212"/>
        <end position="1381"/>
    </location>
</feature>
<feature type="region of interest" description="Interaction with MUC20" evidence="1">
    <location>
        <begin position="1320"/>
        <end position="1359"/>
    </location>
</feature>
<feature type="active site" description="Proton acceptor" evidence="5 7">
    <location>
        <position position="1204"/>
    </location>
</feature>
<feature type="binding site" evidence="5">
    <location>
        <begin position="1084"/>
        <end position="1092"/>
    </location>
    <ligand>
        <name>ATP</name>
        <dbReference type="ChEBI" id="CHEBI:30616"/>
    </ligand>
</feature>
<feature type="binding site" evidence="5">
    <location>
        <position position="1110"/>
    </location>
    <ligand>
        <name>ATP</name>
        <dbReference type="ChEBI" id="CHEBI:30616"/>
    </ligand>
</feature>
<feature type="site" description="Cleavage" evidence="4">
    <location>
        <begin position="307"/>
        <end position="308"/>
    </location>
</feature>
<feature type="modified residue" description="Phosphoserine" evidence="2">
    <location>
        <position position="966"/>
    </location>
</feature>
<feature type="modified residue" description="Phosphothreonine" evidence="2">
    <location>
        <position position="977"/>
    </location>
</feature>
<feature type="modified residue" description="Phosphoserine" evidence="2">
    <location>
        <position position="990"/>
    </location>
</feature>
<feature type="modified residue" description="Phosphoserine" evidence="2">
    <location>
        <position position="997"/>
    </location>
</feature>
<feature type="modified residue" description="Phosphoserine" evidence="2">
    <location>
        <position position="1000"/>
    </location>
</feature>
<feature type="modified residue" description="Phosphotyrosine" evidence="2">
    <location>
        <position position="1003"/>
    </location>
</feature>
<feature type="modified residue" description="Phosphotyrosine" evidence="2">
    <location>
        <position position="1230"/>
    </location>
</feature>
<feature type="modified residue" description="Phosphotyrosine; by autocatalysis" evidence="2">
    <location>
        <position position="1234"/>
    </location>
</feature>
<feature type="modified residue" description="Phosphotyrosine; by autocatalysis" evidence="2">
    <location>
        <position position="1235"/>
    </location>
</feature>
<feature type="modified residue" description="Phosphothreonine" evidence="2">
    <location>
        <position position="1289"/>
    </location>
</feature>
<feature type="modified residue" description="Phosphotyrosine; by autocatalysis" evidence="2">
    <location>
        <position position="1349"/>
    </location>
</feature>
<feature type="modified residue" description="Phosphotyrosine; by autocatalysis" evidence="2">
    <location>
        <position position="1356"/>
    </location>
</feature>
<feature type="modified residue" description="Phosphotyrosine" evidence="2">
    <location>
        <position position="1365"/>
    </location>
</feature>
<feature type="glycosylation site" description="N-linked (GlcNAc...) asparagine" evidence="4">
    <location>
        <position position="45"/>
    </location>
</feature>
<feature type="glycosylation site" description="N-linked (GlcNAc...) asparagine" evidence="4">
    <location>
        <position position="106"/>
    </location>
</feature>
<feature type="glycosylation site" description="N-linked (GlcNAc...) asparagine" evidence="4">
    <location>
        <position position="149"/>
    </location>
</feature>
<feature type="glycosylation site" description="N-linked (GlcNAc...) asparagine" evidence="4">
    <location>
        <position position="202"/>
    </location>
</feature>
<feature type="glycosylation site" description="N-linked (GlcNAc...) asparagine" evidence="4">
    <location>
        <position position="399"/>
    </location>
</feature>
<feature type="glycosylation site" description="N-linked (GlcNAc...) asparagine" evidence="4">
    <location>
        <position position="405"/>
    </location>
</feature>
<feature type="glycosylation site" description="O-linked (Man) threonine" evidence="2">
    <location>
        <position position="582"/>
    </location>
</feature>
<feature type="glycosylation site" description="N-linked (GlcNAc...) asparagine" evidence="4">
    <location>
        <position position="607"/>
    </location>
</feature>
<feature type="glycosylation site" description="N-linked (GlcNAc...) asparagine" evidence="4">
    <location>
        <position position="635"/>
    </location>
</feature>
<feature type="glycosylation site" description="O-linked (Man) threonine" evidence="2">
    <location>
        <position position="676"/>
    </location>
</feature>
<feature type="glycosylation site" description="O-linked (Man) threonine" evidence="2">
    <location>
        <position position="761"/>
    </location>
</feature>
<feature type="glycosylation site" description="N-linked (GlcNAc...) asparagine" evidence="4">
    <location>
        <position position="785"/>
    </location>
</feature>
<feature type="glycosylation site" description="N-linked (GlcNAc...) asparagine" evidence="4">
    <location>
        <position position="879"/>
    </location>
</feature>
<feature type="glycosylation site" description="N-linked (GlcNAc...) asparagine" evidence="4">
    <location>
        <position position="930"/>
    </location>
</feature>
<feature type="disulfide bond" evidence="6">
    <location>
        <begin position="95"/>
        <end position="101"/>
    </location>
</feature>
<feature type="disulfide bond" evidence="6">
    <location>
        <begin position="98"/>
        <end position="160"/>
    </location>
</feature>
<feature type="disulfide bond" evidence="6">
    <location>
        <begin position="133"/>
        <end position="141"/>
    </location>
</feature>
<feature type="disulfide bond" evidence="6">
    <location>
        <begin position="172"/>
        <end position="175"/>
    </location>
</feature>
<feature type="disulfide bond" evidence="6">
    <location>
        <begin position="298"/>
        <end position="363"/>
    </location>
</feature>
<feature type="disulfide bond" evidence="6">
    <location>
        <begin position="385"/>
        <end position="397"/>
    </location>
</feature>
<feature type="disulfide bond" evidence="6">
    <location>
        <begin position="520"/>
        <end position="538"/>
    </location>
</feature>
<feature type="disulfide bond" evidence="6">
    <location>
        <begin position="526"/>
        <end position="561"/>
    </location>
</feature>
<feature type="disulfide bond" evidence="6">
    <location>
        <begin position="529"/>
        <end position="545"/>
    </location>
</feature>
<feature type="disulfide bond" evidence="6">
    <location>
        <begin position="541"/>
        <end position="551"/>
    </location>
</feature>
<proteinExistence type="inferred from homology"/>
<name>MET_COLGU</name>
<dbReference type="EC" id="2.7.10.1"/>
<dbReference type="EMBL" id="DP000193">
    <property type="protein sequence ID" value="ABJ08851.1"/>
    <property type="molecule type" value="Genomic_DNA"/>
</dbReference>
<dbReference type="SMR" id="Q07DZ1"/>
<dbReference type="GlyCosmos" id="Q07DZ1">
    <property type="glycosylation" value="11 sites, No reported glycans"/>
</dbReference>
<dbReference type="GO" id="GO:0005886">
    <property type="term" value="C:plasma membrane"/>
    <property type="evidence" value="ECO:0007669"/>
    <property type="project" value="TreeGrafter"/>
</dbReference>
<dbReference type="GO" id="GO:0002116">
    <property type="term" value="C:semaphorin receptor complex"/>
    <property type="evidence" value="ECO:0007669"/>
    <property type="project" value="TreeGrafter"/>
</dbReference>
<dbReference type="GO" id="GO:0005524">
    <property type="term" value="F:ATP binding"/>
    <property type="evidence" value="ECO:0007669"/>
    <property type="project" value="UniProtKB-KW"/>
</dbReference>
<dbReference type="GO" id="GO:0017154">
    <property type="term" value="F:semaphorin receptor activity"/>
    <property type="evidence" value="ECO:0007669"/>
    <property type="project" value="InterPro"/>
</dbReference>
<dbReference type="GO" id="GO:0004714">
    <property type="term" value="F:transmembrane receptor protein tyrosine kinase activity"/>
    <property type="evidence" value="ECO:0007669"/>
    <property type="project" value="UniProtKB-EC"/>
</dbReference>
<dbReference type="GO" id="GO:0007169">
    <property type="term" value="P:cell surface receptor protein tyrosine kinase signaling pathway"/>
    <property type="evidence" value="ECO:0007669"/>
    <property type="project" value="InterPro"/>
</dbReference>
<dbReference type="GO" id="GO:0050918">
    <property type="term" value="P:positive chemotaxis"/>
    <property type="evidence" value="ECO:0000250"/>
    <property type="project" value="UniProtKB"/>
</dbReference>
<dbReference type="GO" id="GO:2001028">
    <property type="term" value="P:positive regulation of endothelial cell chemotaxis"/>
    <property type="evidence" value="ECO:0000250"/>
    <property type="project" value="UniProtKB"/>
</dbReference>
<dbReference type="GO" id="GO:0071526">
    <property type="term" value="P:semaphorin-plexin signaling pathway"/>
    <property type="evidence" value="ECO:0000250"/>
    <property type="project" value="UniProtKB"/>
</dbReference>
<dbReference type="CDD" id="cd00603">
    <property type="entry name" value="IPT_PCSR"/>
    <property type="match status" value="1"/>
</dbReference>
<dbReference type="CDD" id="cd01180">
    <property type="entry name" value="IPT_plexin_repeat1"/>
    <property type="match status" value="1"/>
</dbReference>
<dbReference type="CDD" id="cd01179">
    <property type="entry name" value="IPT_plexin_repeat2"/>
    <property type="match status" value="1"/>
</dbReference>
<dbReference type="CDD" id="cd05058">
    <property type="entry name" value="PTKc_Met_Ron"/>
    <property type="match status" value="1"/>
</dbReference>
<dbReference type="CDD" id="cd11278">
    <property type="entry name" value="Sema_MET"/>
    <property type="match status" value="1"/>
</dbReference>
<dbReference type="FunFam" id="1.10.510.10:FF:000093">
    <property type="entry name" value="Hepatocyte growth factor receptor"/>
    <property type="match status" value="1"/>
</dbReference>
<dbReference type="FunFam" id="2.130.10.10:FF:000088">
    <property type="entry name" value="Hepatocyte growth factor receptor"/>
    <property type="match status" value="1"/>
</dbReference>
<dbReference type="FunFam" id="2.60.40.10:FF:000213">
    <property type="entry name" value="Hepatocyte growth factor receptor"/>
    <property type="match status" value="1"/>
</dbReference>
<dbReference type="FunFam" id="2.60.40.10:FF:000400">
    <property type="entry name" value="Hepatocyte growth factor receptor"/>
    <property type="match status" value="1"/>
</dbReference>
<dbReference type="FunFam" id="2.60.40.10:FF:002708">
    <property type="entry name" value="Hepatocyte growth factor receptor"/>
    <property type="match status" value="1"/>
</dbReference>
<dbReference type="FunFam" id="3.30.200.20:FF:000188">
    <property type="entry name" value="Hepatocyte growth factor receptor"/>
    <property type="match status" value="1"/>
</dbReference>
<dbReference type="FunFam" id="3.30.1680.10:FF:000006">
    <property type="entry name" value="Macrophage-stimulating 1 receptor b"/>
    <property type="match status" value="1"/>
</dbReference>
<dbReference type="Gene3D" id="2.60.40.10">
    <property type="entry name" value="Immunoglobulins"/>
    <property type="match status" value="2"/>
</dbReference>
<dbReference type="Gene3D" id="3.30.200.20">
    <property type="entry name" value="Phosphorylase Kinase, domain 1"/>
    <property type="match status" value="1"/>
</dbReference>
<dbReference type="Gene3D" id="1.10.510.10">
    <property type="entry name" value="Transferase(Phosphotransferase) domain 1"/>
    <property type="match status" value="1"/>
</dbReference>
<dbReference type="Gene3D" id="2.130.10.10">
    <property type="entry name" value="YVTN repeat-like/Quinoprotein amine dehydrogenase"/>
    <property type="match status" value="1"/>
</dbReference>
<dbReference type="InterPro" id="IPR013783">
    <property type="entry name" value="Ig-like_fold"/>
</dbReference>
<dbReference type="InterPro" id="IPR014756">
    <property type="entry name" value="Ig_E-set"/>
</dbReference>
<dbReference type="InterPro" id="IPR002909">
    <property type="entry name" value="IPT_dom"/>
</dbReference>
<dbReference type="InterPro" id="IPR011009">
    <property type="entry name" value="Kinase-like_dom_sf"/>
</dbReference>
<dbReference type="InterPro" id="IPR031148">
    <property type="entry name" value="Plexin"/>
</dbReference>
<dbReference type="InterPro" id="IPR002165">
    <property type="entry name" value="Plexin_repeat"/>
</dbReference>
<dbReference type="InterPro" id="IPR000719">
    <property type="entry name" value="Prot_kinase_dom"/>
</dbReference>
<dbReference type="InterPro" id="IPR017441">
    <property type="entry name" value="Protein_kinase_ATP_BS"/>
</dbReference>
<dbReference type="InterPro" id="IPR016201">
    <property type="entry name" value="PSI"/>
</dbReference>
<dbReference type="InterPro" id="IPR001627">
    <property type="entry name" value="Semap_dom"/>
</dbReference>
<dbReference type="InterPro" id="IPR036352">
    <property type="entry name" value="Semap_dom_sf"/>
</dbReference>
<dbReference type="InterPro" id="IPR001245">
    <property type="entry name" value="Ser-Thr/Tyr_kinase_cat_dom"/>
</dbReference>
<dbReference type="InterPro" id="IPR008266">
    <property type="entry name" value="Tyr_kinase_AS"/>
</dbReference>
<dbReference type="InterPro" id="IPR020635">
    <property type="entry name" value="Tyr_kinase_cat_dom"/>
</dbReference>
<dbReference type="InterPro" id="IPR016244">
    <property type="entry name" value="Tyr_kinase_HGF/MSP_rcpt"/>
</dbReference>
<dbReference type="InterPro" id="IPR015943">
    <property type="entry name" value="WD40/YVTN_repeat-like_dom_sf"/>
</dbReference>
<dbReference type="PANTHER" id="PTHR22625:SF61">
    <property type="entry name" value="HEPATOCYTE GROWTH FACTOR RECEPTOR"/>
    <property type="match status" value="1"/>
</dbReference>
<dbReference type="PANTHER" id="PTHR22625">
    <property type="entry name" value="PLEXIN"/>
    <property type="match status" value="1"/>
</dbReference>
<dbReference type="Pfam" id="PF07714">
    <property type="entry name" value="PK_Tyr_Ser-Thr"/>
    <property type="match status" value="1"/>
</dbReference>
<dbReference type="Pfam" id="PF01437">
    <property type="entry name" value="PSI"/>
    <property type="match status" value="1"/>
</dbReference>
<dbReference type="Pfam" id="PF01403">
    <property type="entry name" value="Sema"/>
    <property type="match status" value="1"/>
</dbReference>
<dbReference type="Pfam" id="PF01833">
    <property type="entry name" value="TIG"/>
    <property type="match status" value="3"/>
</dbReference>
<dbReference type="PIRSF" id="PIRSF000617">
    <property type="entry name" value="TyrPK_HGF-R"/>
    <property type="match status" value="1"/>
</dbReference>
<dbReference type="PRINTS" id="PR00109">
    <property type="entry name" value="TYRKINASE"/>
</dbReference>
<dbReference type="SMART" id="SM00429">
    <property type="entry name" value="IPT"/>
    <property type="match status" value="4"/>
</dbReference>
<dbReference type="SMART" id="SM00423">
    <property type="entry name" value="PSI"/>
    <property type="match status" value="1"/>
</dbReference>
<dbReference type="SMART" id="SM00630">
    <property type="entry name" value="Sema"/>
    <property type="match status" value="1"/>
</dbReference>
<dbReference type="SMART" id="SM00219">
    <property type="entry name" value="TyrKc"/>
    <property type="match status" value="1"/>
</dbReference>
<dbReference type="SUPFAM" id="SSF81296">
    <property type="entry name" value="E set domains"/>
    <property type="match status" value="3"/>
</dbReference>
<dbReference type="SUPFAM" id="SSF103575">
    <property type="entry name" value="Plexin repeat"/>
    <property type="match status" value="1"/>
</dbReference>
<dbReference type="SUPFAM" id="SSF56112">
    <property type="entry name" value="Protein kinase-like (PK-like)"/>
    <property type="match status" value="1"/>
</dbReference>
<dbReference type="SUPFAM" id="SSF101912">
    <property type="entry name" value="Sema domain"/>
    <property type="match status" value="1"/>
</dbReference>
<dbReference type="PROSITE" id="PS00107">
    <property type="entry name" value="PROTEIN_KINASE_ATP"/>
    <property type="match status" value="1"/>
</dbReference>
<dbReference type="PROSITE" id="PS50011">
    <property type="entry name" value="PROTEIN_KINASE_DOM"/>
    <property type="match status" value="1"/>
</dbReference>
<dbReference type="PROSITE" id="PS00109">
    <property type="entry name" value="PROTEIN_KINASE_TYR"/>
    <property type="match status" value="1"/>
</dbReference>
<dbReference type="PROSITE" id="PS51004">
    <property type="entry name" value="SEMA"/>
    <property type="match status" value="1"/>
</dbReference>
<evidence type="ECO:0000250" key="1"/>
<evidence type="ECO:0000250" key="2">
    <source>
        <dbReference type="UniProtKB" id="P08581"/>
    </source>
</evidence>
<evidence type="ECO:0000250" key="3">
    <source>
        <dbReference type="UniProtKB" id="P16056"/>
    </source>
</evidence>
<evidence type="ECO:0000255" key="4"/>
<evidence type="ECO:0000255" key="5">
    <source>
        <dbReference type="PROSITE-ProRule" id="PRU00159"/>
    </source>
</evidence>
<evidence type="ECO:0000255" key="6">
    <source>
        <dbReference type="PROSITE-ProRule" id="PRU00352"/>
    </source>
</evidence>
<evidence type="ECO:0000255" key="7">
    <source>
        <dbReference type="PROSITE-ProRule" id="PRU10028"/>
    </source>
</evidence>
<protein>
    <recommendedName>
        <fullName>Hepatocyte growth factor receptor</fullName>
        <shortName>HGF receptor</shortName>
        <ecNumber>2.7.10.1</ecNumber>
    </recommendedName>
    <alternativeName>
        <fullName>HGF/SF receptor</fullName>
    </alternativeName>
    <alternativeName>
        <fullName>Proto-oncogene c-Met</fullName>
    </alternativeName>
    <alternativeName>
        <fullName>Scatter factor receptor</fullName>
        <shortName>SF receptor</shortName>
    </alternativeName>
    <alternativeName>
        <fullName>Tyrosine-protein kinase Met</fullName>
    </alternativeName>
</protein>
<comment type="function">
    <text evidence="1">Receptor tyrosine kinase that transduces signals from the extracellular matrix into the cytoplasm by binding to hepatocyte growth factor/HGF ligand. Regulates many physiological processes including proliferation, scattering, morphogenesis and survival. Ligand binding at the cell surface induces autophosphorylation of MET on its intracellular domain that provides docking sites for downstream signaling molecules. Following activation by ligand, interacts with the PI3-kinase subunit PIK3R1, PLCG1, SRC, GRB2, STAT3 or the adapter GAB1. Recruitment of these downstream effectors by MET leads to the activation of several signaling cascades including the RAS-ERK, PI3 kinase-AKT, or PLCgamma-PKC. The RAS-ERK activation is associated with the morphogenetic effects while PI3K/AKT coordinates prosurvival effects. During embryonic development, MET signaling plays a role in gastrulation, development and migration of muscles and neuronal precursors, angiogenesis and kidney formation. In adults, participates in wound healing as well as organ regeneration and tissue remodeling. Also promotes differentiation and proliferation of hematopoietic cells (By similarity).</text>
</comment>
<comment type="catalytic activity">
    <reaction evidence="7">
        <text>L-tyrosyl-[protein] + ATP = O-phospho-L-tyrosyl-[protein] + ADP + H(+)</text>
        <dbReference type="Rhea" id="RHEA:10596"/>
        <dbReference type="Rhea" id="RHEA-COMP:10136"/>
        <dbReference type="Rhea" id="RHEA-COMP:20101"/>
        <dbReference type="ChEBI" id="CHEBI:15378"/>
        <dbReference type="ChEBI" id="CHEBI:30616"/>
        <dbReference type="ChEBI" id="CHEBI:46858"/>
        <dbReference type="ChEBI" id="CHEBI:61978"/>
        <dbReference type="ChEBI" id="CHEBI:456216"/>
        <dbReference type="EC" id="2.7.10.1"/>
    </reaction>
</comment>
<comment type="activity regulation">
    <text evidence="1">In its inactive state, the C-terminal tail interacts with the catalytic domain and inhibits the kinase activity. Upon ligand binding, the C-terminal tail is displaced and becomes phosphorylated, thus increasing the kinase activity (By similarity).</text>
</comment>
<comment type="subunit">
    <text evidence="2 3">Heterodimer made of an alpha chain (50 kDa) and a beta chain (145 kDa) which are disulfide linked. Binds PLXNB1. Interacts when phosphorylated with downstream effectors including STAT3, PIK3R1, SRC, PCLG1, GRB2 and GAB1. Interacts with SPSB1, SPSB2 and SPSB4. Interacts with INPP5D/SHIP1. When phosphorylated at Tyr-1356, interacts with INPPL1/SHIP2. Interacts with RANBP9 and RANBP10, as well as SPSB1, SPSB2, SPSB3 and SPSB4. SPSB1 binding occurs in the presence and in the absence of HGF, however HGF treatment has a positive effect on this interaction. Interacts with MUC20; prevents interaction with GRB2 and suppresses hepatocyte growth factor-induced cell proliferation. Interacts with GRB10. Interacts with PTPN1 and PTPN2. Interacts with HSP90AA1 and HSP90AB1; the interaction suppresses MET kinase activity. Interacts with tensin TNS3 (By similarity). Interacts (when phosphorylated) with tensin TNS4 (via SH2 domain); the interaction increases MET protein stability by inhibiting MET endocytosis and subsequent lysosomal degradation (By similarity).</text>
</comment>
<comment type="subcellular location">
    <subcellularLocation>
        <location evidence="1">Membrane</location>
        <topology evidence="1">Single-pass type I membrane protein</topology>
    </subcellularLocation>
</comment>
<comment type="domain">
    <text evidence="1">The kinase domain is involved in SPSB1 binding.</text>
</comment>
<comment type="domain">
    <text evidence="1">The beta-propeller Sema domain mediates binding to HGF.</text>
</comment>
<comment type="PTM">
    <text evidence="2">Autophosphorylated in response to ligand binding on Tyr-1234 and Tyr-1235 in the kinase domain leading to further phosphorylation of Tyr-1349 and Tyr-1356 in the C-terminal multifunctional docking site. Dephosphorylated by PTPRJ at Tyr-1349 and Tyr-1365. Dephosphorylated by PTPN1 and PTPN2 (By similarity).</text>
</comment>
<comment type="PTM">
    <text evidence="2">Ubiquitinated. Ubiquitination by CBL regulates the receptor stability and activity through proteasomal degradation (By similarity).</text>
</comment>
<comment type="PTM">
    <text evidence="2">O-mannosylation of IPT/TIG domains by TMEM260 is required for protein maturation. O-mannosylated residues are composed of single mannose glycans that are not elongated or modified.</text>
</comment>
<comment type="similarity">
    <text evidence="5">Belongs to the protein kinase superfamily. Tyr protein kinase family.</text>
</comment>
<accession>Q07DZ1</accession>
<gene>
    <name type="primary">MET</name>
</gene>
<keyword id="KW-0067">ATP-binding</keyword>
<keyword id="KW-1015">Disulfide bond</keyword>
<keyword id="KW-0325">Glycoprotein</keyword>
<keyword id="KW-0418">Kinase</keyword>
<keyword id="KW-0472">Membrane</keyword>
<keyword id="KW-0547">Nucleotide-binding</keyword>
<keyword id="KW-0597">Phosphoprotein</keyword>
<keyword id="KW-0656">Proto-oncogene</keyword>
<keyword id="KW-0675">Receptor</keyword>
<keyword id="KW-0677">Repeat</keyword>
<keyword id="KW-0732">Signal</keyword>
<keyword id="KW-0808">Transferase</keyword>
<keyword id="KW-0812">Transmembrane</keyword>
<keyword id="KW-1133">Transmembrane helix</keyword>
<keyword id="KW-0829">Tyrosine-protein kinase</keyword>
<keyword id="KW-0832">Ubl conjugation</keyword>
<reference key="1">
    <citation type="submission" date="2006-09" db="EMBL/GenBank/DDBJ databases">
        <title>NISC comparative sequencing initiative.</title>
        <authorList>
            <person name="Antonellis A."/>
            <person name="Ayele K."/>
            <person name="Benjamin B."/>
            <person name="Blakesley R.W."/>
            <person name="Boakye A."/>
            <person name="Bouffard G.G."/>
            <person name="Brinkley C."/>
            <person name="Brooks S."/>
            <person name="Chu G."/>
            <person name="Coleman H."/>
            <person name="Engle J."/>
            <person name="Gestole M."/>
            <person name="Greene A."/>
            <person name="Guan X."/>
            <person name="Gupta J."/>
            <person name="Haghighi P."/>
            <person name="Han J."/>
            <person name="Hansen N."/>
            <person name="Ho S.-L."/>
            <person name="Hu P."/>
            <person name="Hunter G."/>
            <person name="Hurle B."/>
            <person name="Idol J.R."/>
            <person name="Kwong P."/>
            <person name="Laric P."/>
            <person name="Larson S."/>
            <person name="Lee-Lin S.-Q."/>
            <person name="Legaspi R."/>
            <person name="Madden M."/>
            <person name="Maduro Q.L."/>
            <person name="Maduro V.B."/>
            <person name="Margulies E.H."/>
            <person name="Masiello C."/>
            <person name="Maskeri B."/>
            <person name="McDowell J."/>
            <person name="Mojidi H.A."/>
            <person name="Mullikin J.C."/>
            <person name="Oestreicher J.S."/>
            <person name="Park M."/>
            <person name="Portnoy M.E."/>
            <person name="Prasad A."/>
            <person name="Puri O."/>
            <person name="Reddix-Dugue N."/>
            <person name="Schandler K."/>
            <person name="Schueler M.G."/>
            <person name="Sison C."/>
            <person name="Stantripop S."/>
            <person name="Stephen E."/>
            <person name="Taye A."/>
            <person name="Thomas J.W."/>
            <person name="Thomas P.J."/>
            <person name="Tsipouri V."/>
            <person name="Ung L."/>
            <person name="Vogt J.L."/>
            <person name="Wetherby K.D."/>
            <person name="Young A."/>
            <person name="Green E.D."/>
        </authorList>
    </citation>
    <scope>NUCLEOTIDE SEQUENCE [LARGE SCALE GENOMIC DNA]</scope>
</reference>
<organism>
    <name type="scientific">Colobus guereza</name>
    <name type="common">Mantled guereza</name>
    <name type="synonym">Eastern black-and-white colobus monkey</name>
    <dbReference type="NCBI Taxonomy" id="33548"/>
    <lineage>
        <taxon>Eukaryota</taxon>
        <taxon>Metazoa</taxon>
        <taxon>Chordata</taxon>
        <taxon>Craniata</taxon>
        <taxon>Vertebrata</taxon>
        <taxon>Euteleostomi</taxon>
        <taxon>Mammalia</taxon>
        <taxon>Eutheria</taxon>
        <taxon>Euarchontoglires</taxon>
        <taxon>Primates</taxon>
        <taxon>Haplorrhini</taxon>
        <taxon>Catarrhini</taxon>
        <taxon>Cercopithecidae</taxon>
        <taxon>Colobinae</taxon>
        <taxon>Colobus</taxon>
    </lineage>
</organism>